<reference key="1">
    <citation type="journal article" date="2006" name="Nat. Biotechnol.">
        <title>Complete genome sequence of the entomopathogenic and metabolically versatile soil bacterium Pseudomonas entomophila.</title>
        <authorList>
            <person name="Vodovar N."/>
            <person name="Vallenet D."/>
            <person name="Cruveiller S."/>
            <person name="Rouy Z."/>
            <person name="Barbe V."/>
            <person name="Acosta C."/>
            <person name="Cattolico L."/>
            <person name="Jubin C."/>
            <person name="Lajus A."/>
            <person name="Segurens B."/>
            <person name="Vacherie B."/>
            <person name="Wincker P."/>
            <person name="Weissenbach J."/>
            <person name="Lemaitre B."/>
            <person name="Medigue C."/>
            <person name="Boccard F."/>
        </authorList>
    </citation>
    <scope>NUCLEOTIDE SEQUENCE [LARGE SCALE GENOMIC DNA]</scope>
    <source>
        <strain>L48</strain>
    </source>
</reference>
<proteinExistence type="inferred from homology"/>
<evidence type="ECO:0000255" key="1">
    <source>
        <dbReference type="HAMAP-Rule" id="MF_01187"/>
    </source>
</evidence>
<dbReference type="EMBL" id="CT573326">
    <property type="protein sequence ID" value="CAK14463.1"/>
    <property type="molecule type" value="Genomic_DNA"/>
</dbReference>
<dbReference type="RefSeq" id="WP_011532874.1">
    <property type="nucleotide sequence ID" value="NC_008027.1"/>
</dbReference>
<dbReference type="SMR" id="Q1ID00"/>
<dbReference type="STRING" id="384676.PSEEN1604"/>
<dbReference type="KEGG" id="pen:PSEEN1604"/>
<dbReference type="eggNOG" id="COG2835">
    <property type="taxonomic scope" value="Bacteria"/>
</dbReference>
<dbReference type="HOGENOM" id="CLU_155659_3_1_6"/>
<dbReference type="OrthoDB" id="9812205at2"/>
<dbReference type="Proteomes" id="UP000000658">
    <property type="component" value="Chromosome"/>
</dbReference>
<dbReference type="GO" id="GO:0005829">
    <property type="term" value="C:cytosol"/>
    <property type="evidence" value="ECO:0007669"/>
    <property type="project" value="TreeGrafter"/>
</dbReference>
<dbReference type="FunFam" id="2.20.25.10:FF:000002">
    <property type="entry name" value="UPF0434 protein YcaR"/>
    <property type="match status" value="1"/>
</dbReference>
<dbReference type="Gene3D" id="2.20.25.10">
    <property type="match status" value="1"/>
</dbReference>
<dbReference type="HAMAP" id="MF_01187">
    <property type="entry name" value="UPF0434"/>
    <property type="match status" value="1"/>
</dbReference>
<dbReference type="InterPro" id="IPR005651">
    <property type="entry name" value="Trm112-like"/>
</dbReference>
<dbReference type="PANTHER" id="PTHR33505:SF4">
    <property type="entry name" value="PROTEIN PREY, MITOCHONDRIAL"/>
    <property type="match status" value="1"/>
</dbReference>
<dbReference type="PANTHER" id="PTHR33505">
    <property type="entry name" value="ZGC:162634"/>
    <property type="match status" value="1"/>
</dbReference>
<dbReference type="Pfam" id="PF03966">
    <property type="entry name" value="Trm112p"/>
    <property type="match status" value="1"/>
</dbReference>
<dbReference type="SUPFAM" id="SSF158997">
    <property type="entry name" value="Trm112p-like"/>
    <property type="match status" value="1"/>
</dbReference>
<protein>
    <recommendedName>
        <fullName evidence="1">UPF0434 protein PSEEN1604</fullName>
    </recommendedName>
</protein>
<accession>Q1ID00</accession>
<gene>
    <name type="ordered locus">PSEEN1604</name>
</gene>
<comment type="similarity">
    <text evidence="1">Belongs to the UPF0434 family.</text>
</comment>
<sequence length="61" mass="6656">MDTKLLDILACPITKGPLKLSADKTELISKGAGLAYPIRDGIPVMLESEARTLTDEERLDK</sequence>
<feature type="chain" id="PRO_0000291133" description="UPF0434 protein PSEEN1604">
    <location>
        <begin position="1"/>
        <end position="61"/>
    </location>
</feature>
<organism>
    <name type="scientific">Pseudomonas entomophila (strain L48)</name>
    <dbReference type="NCBI Taxonomy" id="384676"/>
    <lineage>
        <taxon>Bacteria</taxon>
        <taxon>Pseudomonadati</taxon>
        <taxon>Pseudomonadota</taxon>
        <taxon>Gammaproteobacteria</taxon>
        <taxon>Pseudomonadales</taxon>
        <taxon>Pseudomonadaceae</taxon>
        <taxon>Pseudomonas</taxon>
    </lineage>
</organism>
<name>Y1604_PSEE4</name>